<gene>
    <name evidence="1" type="primary">lptD</name>
    <name type="synonym">imp</name>
    <name type="synonym">ostA</name>
    <name type="ordered locus">NMA2207</name>
</gene>
<proteinExistence type="inferred from homology"/>
<feature type="signal peptide" evidence="1">
    <location>
        <begin position="1"/>
        <end position="29"/>
    </location>
</feature>
<feature type="chain" id="PRO_0000281619" description="LPS-assembly protein LptD">
    <location>
        <begin position="30"/>
        <end position="802"/>
    </location>
</feature>
<accession>A1IU30</accession>
<dbReference type="EMBL" id="AL157959">
    <property type="protein sequence ID" value="CAM09300.1"/>
    <property type="molecule type" value="Genomic_DNA"/>
</dbReference>
<dbReference type="RefSeq" id="WP_002245292.1">
    <property type="nucleotide sequence ID" value="NC_003116.1"/>
</dbReference>
<dbReference type="SMR" id="A1IU30"/>
<dbReference type="EnsemblBacteria" id="CAM09300">
    <property type="protein sequence ID" value="CAM09300"/>
    <property type="gene ID" value="NMA2207"/>
</dbReference>
<dbReference type="KEGG" id="nma:NMA2207"/>
<dbReference type="HOGENOM" id="CLU_009039_0_0_4"/>
<dbReference type="Proteomes" id="UP000000626">
    <property type="component" value="Chromosome"/>
</dbReference>
<dbReference type="GO" id="GO:0009279">
    <property type="term" value="C:cell outer membrane"/>
    <property type="evidence" value="ECO:0007669"/>
    <property type="project" value="UniProtKB-SubCell"/>
</dbReference>
<dbReference type="GO" id="GO:1990351">
    <property type="term" value="C:transporter complex"/>
    <property type="evidence" value="ECO:0007669"/>
    <property type="project" value="TreeGrafter"/>
</dbReference>
<dbReference type="GO" id="GO:0043165">
    <property type="term" value="P:Gram-negative-bacterium-type cell outer membrane assembly"/>
    <property type="evidence" value="ECO:0007669"/>
    <property type="project" value="UniProtKB-UniRule"/>
</dbReference>
<dbReference type="GO" id="GO:0015920">
    <property type="term" value="P:lipopolysaccharide transport"/>
    <property type="evidence" value="ECO:0007669"/>
    <property type="project" value="InterPro"/>
</dbReference>
<dbReference type="Gene3D" id="2.60.450.10">
    <property type="entry name" value="Lipopolysaccharide (LPS) transport protein A like domain"/>
    <property type="match status" value="1"/>
</dbReference>
<dbReference type="HAMAP" id="MF_01411">
    <property type="entry name" value="LPS_assembly_LptD"/>
    <property type="match status" value="1"/>
</dbReference>
<dbReference type="InterPro" id="IPR020889">
    <property type="entry name" value="LipoPS_assembly_LptD"/>
</dbReference>
<dbReference type="InterPro" id="IPR050218">
    <property type="entry name" value="LptD"/>
</dbReference>
<dbReference type="InterPro" id="IPR007543">
    <property type="entry name" value="LptD_C"/>
</dbReference>
<dbReference type="PANTHER" id="PTHR30189">
    <property type="entry name" value="LPS-ASSEMBLY PROTEIN"/>
    <property type="match status" value="1"/>
</dbReference>
<dbReference type="PANTHER" id="PTHR30189:SF1">
    <property type="entry name" value="LPS-ASSEMBLY PROTEIN LPTD"/>
    <property type="match status" value="1"/>
</dbReference>
<dbReference type="Pfam" id="PF04453">
    <property type="entry name" value="LptD"/>
    <property type="match status" value="1"/>
</dbReference>
<organism>
    <name type="scientific">Neisseria meningitidis serogroup A / serotype 4A (strain DSM 15465 / Z2491)</name>
    <dbReference type="NCBI Taxonomy" id="122587"/>
    <lineage>
        <taxon>Bacteria</taxon>
        <taxon>Pseudomonadati</taxon>
        <taxon>Pseudomonadota</taxon>
        <taxon>Betaproteobacteria</taxon>
        <taxon>Neisseriales</taxon>
        <taxon>Neisseriaceae</taxon>
        <taxon>Neisseria</taxon>
    </lineage>
</organism>
<sequence length="802" mass="88505">MARLFSLKPLVLALGFCFGTHCAAADAVAAEETDNPTAGGSVRSVSEPIQPTSLSLGSTCLFCSNESGSPERTEAAVQGSGEASIPEDYTRIVADRMEGQSQVQVRAEGNVVVERNRTTLNADWADYDQSGDTVTAGDRFALQQDGTLIRGETLTYNLEQQTGEAHNVRMETEHGGRRLQSVSRTAEMLGEGHYKLTETQFNTCSAGDAGWYVKAASVEADREKGIGVAKHAAFVFGGVPIFYTPWADFPLDGNRKSGLLVPSLSAGSDGVSLSVPYYFNLAPNLDATFAPGVIGERGAVFDGQVRYLRPDYAGQSDLTWLPHDKKSGRNNRYQAKWQHRHDISDTLQAGVDFNQVSDSGYYRDFYGNKEIAGNVNLNRRVWLDYGGRAAGGSLNAGLSVLKYQTLANQSGYKDKPYALMPRLSADWRKNTGRAQIGVSAQFTRFSHDSRQDGSRLVVYPDIKWDFSNSWGYVRPKLGLHATYYSLNRFGSQEARRVSRTLPIVNIDSGMTFERNTRMFGGGVLQTLEPRLFYNYIPAKSQNDLPNFDSSESSFGYGQLFRENLYYGNDRINTANSLSAAVQSRILDGATGEERFRAGIGQKFYFKNDAVMLDGSVGKKPRSRSDWVAFASSGIGSRFILDSSIHYNQNDKRAENYAVGASYRPAQGKVLNARYKYGRNEKIYLKSDGSYFYDKLSQLDLSAQWPLTRNLSAVVRYNYGFEAKKPIEVLAGAEYKSSCGCWGAGVYAQRYVTGENTYKNAVFFSLQLKDLSSVGRNPADRMDVAVPGYIPAHSLSAGRNKRP</sequence>
<protein>
    <recommendedName>
        <fullName evidence="1">LPS-assembly protein LptD</fullName>
    </recommendedName>
</protein>
<keyword id="KW-0998">Cell outer membrane</keyword>
<keyword id="KW-0472">Membrane</keyword>
<keyword id="KW-0732">Signal</keyword>
<evidence type="ECO:0000255" key="1">
    <source>
        <dbReference type="HAMAP-Rule" id="MF_01411"/>
    </source>
</evidence>
<reference key="1">
    <citation type="journal article" date="2000" name="Nature">
        <title>Complete DNA sequence of a serogroup A strain of Neisseria meningitidis Z2491.</title>
        <authorList>
            <person name="Parkhill J."/>
            <person name="Achtman M."/>
            <person name="James K.D."/>
            <person name="Bentley S.D."/>
            <person name="Churcher C.M."/>
            <person name="Klee S.R."/>
            <person name="Morelli G."/>
            <person name="Basham D."/>
            <person name="Brown D."/>
            <person name="Chillingworth T."/>
            <person name="Davies R.M."/>
            <person name="Davis P."/>
            <person name="Devlin K."/>
            <person name="Feltwell T."/>
            <person name="Hamlin N."/>
            <person name="Holroyd S."/>
            <person name="Jagels K."/>
            <person name="Leather S."/>
            <person name="Moule S."/>
            <person name="Mungall K.L."/>
            <person name="Quail M.A."/>
            <person name="Rajandream M.A."/>
            <person name="Rutherford K.M."/>
            <person name="Simmonds M."/>
            <person name="Skelton J."/>
            <person name="Whitehead S."/>
            <person name="Spratt B.G."/>
            <person name="Barrell B.G."/>
        </authorList>
    </citation>
    <scope>NUCLEOTIDE SEQUENCE [LARGE SCALE GENOMIC DNA]</scope>
    <source>
        <strain>DSM 15465 / Z2491</strain>
    </source>
</reference>
<name>LPTD_NEIMA</name>
<comment type="function">
    <text evidence="1">Together with LptE, is involved in the assembly of lipopolysaccharide (LPS) at the surface of the outer membrane.</text>
</comment>
<comment type="subunit">
    <text evidence="1">Component of the lipopolysaccharide transport and assembly complex. Interacts with LptE and LptA.</text>
</comment>
<comment type="subcellular location">
    <subcellularLocation>
        <location evidence="1">Cell outer membrane</location>
    </subcellularLocation>
</comment>
<comment type="similarity">
    <text evidence="1">Belongs to the LptD family.</text>
</comment>